<keyword id="KW-0002">3D-structure</keyword>
<keyword id="KW-0051">Antiviral defense</keyword>
<keyword id="KW-0175">Coiled coil</keyword>
<keyword id="KW-0255">Endonuclease</keyword>
<keyword id="KW-0378">Hydrolase</keyword>
<keyword id="KW-0540">Nuclease</keyword>
<keyword id="KW-0677">Repeat</keyword>
<keyword id="KW-0694">RNA-binding</keyword>
<organism>
    <name type="scientific">Leptotrichia buccalis (strain ATCC 14201 / DSM 1135 / JCM 12969 / NCTC 10249 / C-1013-b)</name>
    <dbReference type="NCBI Taxonomy" id="523794"/>
    <lineage>
        <taxon>Bacteria</taxon>
        <taxon>Fusobacteriati</taxon>
        <taxon>Fusobacteriota</taxon>
        <taxon>Fusobacteriia</taxon>
        <taxon>Fusobacteriales</taxon>
        <taxon>Leptotrichiaceae</taxon>
        <taxon>Leptotrichia</taxon>
    </lineage>
</organism>
<proteinExistence type="evidence at protein level"/>
<feature type="chain" id="PRO_0000442266" description="CRISPR-associated endoribonuclease Cas13a">
    <location>
        <begin position="1"/>
        <end position="1159"/>
    </location>
</feature>
<feature type="region of interest" description="NTD" evidence="13">
    <location>
        <begin position="1"/>
        <end position="170"/>
    </location>
</feature>
<feature type="region of interest" description="Binds crRNA repeat and spacer" evidence="4">
    <location>
        <begin position="1"/>
        <end position="11"/>
    </location>
</feature>
<feature type="region of interest" description="Binds crRNA repeat" evidence="4">
    <location>
        <begin position="139"/>
        <end position="151"/>
    </location>
</feature>
<feature type="region of interest" description="Helical-1" evidence="13">
    <location>
        <begin position="171"/>
        <end position="360"/>
    </location>
</feature>
<feature type="region of interest" description="Binds crRNA repeat" evidence="4">
    <location>
        <begin position="172"/>
        <end position="176"/>
    </location>
</feature>
<feature type="region of interest" description="Binds crRNA repeat" evidence="4">
    <location>
        <begin position="224"/>
        <end position="233"/>
    </location>
</feature>
<feature type="region of interest" description="Binds crRNA repeat" evidence="4">
    <location>
        <begin position="271"/>
        <end position="276"/>
    </location>
</feature>
<feature type="region of interest" description="Binds crRNA repeat" evidence="4">
    <location>
        <begin position="294"/>
        <end position="297"/>
    </location>
</feature>
<feature type="region of interest" description="Binds crRNA repeat" evidence="4">
    <location>
        <begin position="301"/>
        <end position="305"/>
    </location>
</feature>
<feature type="region of interest" description="Binds crRNA processing site" evidence="4">
    <location>
        <begin position="319"/>
        <end position="328"/>
    </location>
</feature>
<feature type="region of interest" description="Binds crRNA repeat" evidence="4">
    <location>
        <begin position="336"/>
        <end position="340"/>
    </location>
</feature>
<feature type="region of interest" description="HEPN-like fold 1-I" evidence="9 13">
    <location>
        <begin position="361"/>
        <end position="508"/>
    </location>
</feature>
<feature type="region of interest" description="Binds crRNA repeat" evidence="4">
    <location>
        <begin position="371"/>
        <end position="378"/>
    </location>
</feature>
<feature type="region of interest" description="Helical-2" evidence="13">
    <location>
        <begin position="509"/>
        <end position="751"/>
    </location>
</feature>
<feature type="region of interest" description="Binds target RNA" evidence="4">
    <location>
        <begin position="519"/>
        <end position="522"/>
    </location>
</feature>
<feature type="region of interest" description="Binds crRNA spacer" evidence="4">
    <location>
        <begin position="547"/>
        <end position="558"/>
    </location>
</feature>
<feature type="region of interest" description="Binds target RNA" evidence="4">
    <location>
        <begin position="590"/>
        <end position="597"/>
    </location>
</feature>
<feature type="region of interest" description="Binds crRNA spacer" evidence="4">
    <location>
        <begin position="718"/>
        <end position="722"/>
    </location>
</feature>
<feature type="region of interest" description="HEPN-like fold 1-II" evidence="13">
    <location>
        <begin position="752"/>
        <end position="813"/>
    </location>
</feature>
<feature type="region of interest" description="Binds crRNA repeat" evidence="4">
    <location>
        <begin position="780"/>
        <end position="783"/>
    </location>
</feature>
<feature type="region of interest" description="Binds crRNA spacer and target RNA" evidence="4">
    <location>
        <begin position="804"/>
        <end position="810"/>
    </location>
</feature>
<feature type="region of interest" description="Linker" evidence="13">
    <location>
        <begin position="814"/>
        <end position="946"/>
    </location>
</feature>
<feature type="region of interest" description="Binds crRNA spacer" evidence="4">
    <location>
        <begin position="845"/>
        <end position="857"/>
    </location>
</feature>
<feature type="region of interest" description="Binds crRNA spacer" evidence="4">
    <location>
        <begin position="938"/>
        <end position="942"/>
    </location>
</feature>
<feature type="region of interest" description="HEPN-like fold 2" evidence="9 13">
    <location>
        <begin position="947"/>
        <end position="1159"/>
    </location>
</feature>
<feature type="region of interest" description="Binds crRNA repeat" evidence="4">
    <location>
        <begin position="962"/>
        <end position="963"/>
    </location>
</feature>
<feature type="region of interest" description="Binds 3'-end of target RNA, in adjacent protein" evidence="4">
    <location>
        <begin position="995"/>
        <end position="998"/>
    </location>
</feature>
<feature type="region of interest" description="Binds crRNA processing site" evidence="4">
    <location>
        <begin position="1072"/>
        <end position="1082"/>
    </location>
</feature>
<feature type="region of interest" description="Binds crRNA processing site" evidence="4">
    <location>
        <begin position="1104"/>
        <end position="1108"/>
    </location>
</feature>
<feature type="coiled-coil region" evidence="1">
    <location>
        <begin position="880"/>
        <end position="946"/>
    </location>
</feature>
<feature type="active site" description="For target RNA cleavage" evidence="10">
    <location>
        <position position="472"/>
    </location>
</feature>
<feature type="active site" description="For target RNA cleavage" evidence="10">
    <location>
        <position position="477"/>
    </location>
</feature>
<feature type="active site" description="For target RNA cleavage" evidence="10">
    <location>
        <position position="1048"/>
    </location>
</feature>
<feature type="active site" description="For target RNA cleavage" evidence="10">
    <location>
        <position position="1053"/>
    </location>
</feature>
<feature type="site" description="Binds target RNA" evidence="4">
    <location>
        <position position="41"/>
    </location>
</feature>
<feature type="site" description="Binds 3' nucleotide of the target RNA PFS" evidence="4">
    <location>
        <position position="47"/>
    </location>
</feature>
<feature type="site" description="Binds target RNA" evidence="4">
    <location>
        <position position="86"/>
    </location>
</feature>
<feature type="site" description="Binds crRNA repeat" evidence="4">
    <location>
        <position position="245"/>
    </location>
</feature>
<feature type="site" description="Binds crRNA repeat" evidence="4">
    <location>
        <position position="377"/>
    </location>
</feature>
<feature type="site" description="Binds 3'-end of target RNA, in adjacent protein" evidence="4">
    <location>
        <position position="473"/>
    </location>
</feature>
<feature type="site" description="Binds crRNA spacer" evidence="4">
    <location>
        <position position="601"/>
    </location>
</feature>
<feature type="site" description="Binds target RNA" evidence="4">
    <location>
        <position position="659"/>
    </location>
</feature>
<feature type="site" description="Binds crRNA spacer" evidence="4">
    <location>
        <position position="771"/>
    </location>
</feature>
<feature type="site" description="Binds crRNA spacer" evidence="4">
    <location>
        <position position="901"/>
    </location>
</feature>
<feature type="site" description="Binds target RNA" evidence="4">
    <location>
        <position position="904"/>
    </location>
</feature>
<feature type="site" description="Binds target RNA" evidence="4">
    <location>
        <position position="1135"/>
    </location>
</feature>
<feature type="mutagenesis site" description="Decreased cleavage of target RNA." evidence="4">
    <original>K</original>
    <variation>A</variation>
    <location>
        <position position="2"/>
    </location>
</feature>
<feature type="mutagenesis site" description="Decreased cleavage of target RNA." evidence="4">
    <original>K</original>
    <variation>A</variation>
    <location>
        <position position="5"/>
    </location>
</feature>
<feature type="mutagenesis site" description="Wild-type pre-crRNA cleavage." evidence="3">
    <original>E</original>
    <variation>A</variation>
    <location>
        <position position="299"/>
    </location>
</feature>
<feature type="mutagenesis site" description="Wild-type pre-crRNA cleavage." evidence="3">
    <original>K</original>
    <variation>A</variation>
    <location>
        <position position="310"/>
    </location>
</feature>
<feature type="mutagenesis site" description="60% pre-crRNA cleavage." evidence="3">
    <original>R</original>
    <variation>A</variation>
    <location>
        <position position="311"/>
    </location>
</feature>
<feature type="mutagenesis site" description="20% pre-crRNA cleavage." evidence="3">
    <original>N</original>
    <variation>A</variation>
    <location>
        <position position="314"/>
    </location>
</feature>
<feature type="mutagenesis site" description="Decreased processing of pre-crRNA." evidence="4">
    <original>R</original>
    <variation>A</variation>
    <location>
        <position position="322"/>
    </location>
</feature>
<feature type="mutagenesis site" description="Decreased cleavage of target RNA." evidence="4">
    <original>Q</original>
    <variation>A</variation>
    <location>
        <position position="371"/>
    </location>
</feature>
<feature type="mutagenesis site" description="Decreased cleavage of target RNA." evidence="4">
    <original>F</original>
    <variation>A</variation>
    <location>
        <position position="375"/>
    </location>
</feature>
<feature type="mutagenesis site" description="No cleavage of target RNA, retains pre-crRNA cleavage. Still no effect on pre-crRNA cleavage; when associated with 1048-A--A-1053." evidence="2">
    <original>RHGIVH</original>
    <variation>AHGIVA</variation>
    <location>
        <begin position="472"/>
        <end position="477"/>
    </location>
</feature>
<feature type="mutagenesis site" description="Decreased cleavage of target RNA." evidence="4">
    <original>H</original>
    <variation>A</variation>
    <location>
        <position position="473"/>
    </location>
</feature>
<feature type="mutagenesis site" description="Decreased cleavage of target RNA." evidence="4">
    <original>Q</original>
    <variation>A</variation>
    <location>
        <position position="519"/>
    </location>
</feature>
<feature type="mutagenesis site" description="Dramatically decreased cleavage of target RNA." evidence="4">
    <original>K</original>
    <variation>A</variation>
    <location>
        <position position="558"/>
    </location>
</feature>
<feature type="mutagenesis site" description="Decreased cleavage of target RNA." evidence="4">
    <original>Y</original>
    <variation>A</variation>
    <location>
        <position position="601"/>
    </location>
</feature>
<feature type="mutagenesis site" description="Decreased cleavage of target RNA." evidence="4">
    <original>K</original>
    <variation>A</variation>
    <location>
        <position position="718"/>
    </location>
</feature>
<feature type="mutagenesis site" description="Decreased cleavage of target RNA." evidence="4">
    <original>K</original>
    <variation>A</variation>
    <location>
        <position position="783"/>
    </location>
</feature>
<feature type="mutagenesis site" description="Decreased cleavage of target RNA." evidence="4">
    <original>R</original>
    <variation>A</variation>
    <location>
        <position position="809"/>
    </location>
</feature>
<feature type="mutagenesis site" description="Decreased cleavage of target RNA." evidence="4">
    <original>K</original>
    <variation>A</variation>
    <location>
        <position position="845"/>
    </location>
</feature>
<feature type="mutagenesis site" description="Decreased cleavage of target RNA." evidence="4">
    <original>R</original>
    <variation>A</variation>
    <location>
        <position position="857"/>
    </location>
</feature>
<feature type="mutagenesis site" description="Decreased cleavage of target RNA." evidence="4">
    <original>Y</original>
    <variation>A</variation>
    <location>
        <position position="938"/>
    </location>
</feature>
<feature type="mutagenesis site" description="Decreased cleavage of target RNA." evidence="4">
    <original>K</original>
    <variation>A</variation>
    <location>
        <position position="942"/>
    </location>
</feature>
<feature type="mutagenesis site" description="Decreased cleavage of target RNA." evidence="4">
    <original>H</original>
    <variation>A</variation>
    <location>
        <position position="962"/>
    </location>
</feature>
<feature type="mutagenesis site" description="Nearly no cleavage of target RNA." evidence="4">
    <original>R</original>
    <variation>A</variation>
    <location>
        <position position="963"/>
    </location>
</feature>
<feature type="mutagenesis site" description="Decreased cleavage of target RNA." evidence="4">
    <original>F</original>
    <variation>A</variation>
    <location>
        <position position="995"/>
    </location>
</feature>
<feature type="mutagenesis site" description="Decreased cleavage of target RNA." evidence="4">
    <original>N</original>
    <variation>A</variation>
    <location>
        <position position="997"/>
    </location>
</feature>
<feature type="mutagenesis site" description="Decreased cleavage of target RNA." evidence="4">
    <original>K</original>
    <variation>A</variation>
    <location>
        <position position="998"/>
    </location>
</feature>
<feature type="mutagenesis site" description="No cleavage of target RNA, retains pre-crRNA cleavage. Still no effect on pre-crRNA cleavage; when associated with 427-A--A-477." evidence="2">
    <original>RNYIAH</original>
    <variation>ANYIAA</variation>
    <location>
        <begin position="1048"/>
        <end position="1053"/>
    </location>
</feature>
<feature type="mutagenesis site" description="Barely detectable pre-crRNA cleavage." evidence="3 4">
    <original>R</original>
    <variation>A</variation>
    <location>
        <position position="1072"/>
    </location>
</feature>
<feature type="mutagenesis site" description="80% pre-crRNA cleavage." evidence="3">
    <original>D</original>
    <variation>A</variation>
    <location>
        <position position="1078"/>
    </location>
</feature>
<feature type="mutagenesis site" description="Complete loss of pre-crRNA cleavage, retains target RNA cleavage. Decreased ability to activate non-specific RNA degradation when tested with a 6-spacer CRISPR array." evidence="3">
    <original>RK</original>
    <variation>AA</variation>
    <location>
        <begin position="1079"/>
        <end position="1080"/>
    </location>
</feature>
<feature type="mutagenesis site" description="Barely detectable pre-crRNA cleavage, retains target RNA cleavage." evidence="2 3 4">
    <original>R</original>
    <variation>A</variation>
    <variation>K</variation>
    <location>
        <position position="1079"/>
    </location>
</feature>
<feature type="mutagenesis site" description="60% pre-crRNA cleavage." evidence="3">
    <original>K</original>
    <variation>A</variation>
    <location>
        <position position="1080"/>
    </location>
</feature>
<feature type="mutagenesis site" description="Barely detectable pre-crRNA cleavage." evidence="3 4">
    <original>K</original>
    <variation>A</variation>
    <location>
        <position position="1082"/>
    </location>
</feature>
<feature type="mutagenesis site" description="Wild-type pre-crRNA cleavage." evidence="3">
    <original>K</original>
    <variation>A</variation>
    <location>
        <position position="1087"/>
    </location>
</feature>
<feature type="mutagenesis site" description="Loss of pre-crRNA cleavage." evidence="4">
    <original>K</original>
    <variation>A</variation>
    <variation>R</variation>
    <location>
        <position position="1108"/>
    </location>
</feature>
<feature type="mutagenesis site" description="Decreased cleavage of target RNA." evidence="4">
    <original>R</original>
    <variation>A</variation>
    <location>
        <position position="1135"/>
    </location>
</feature>
<feature type="strand" evidence="16">
    <location>
        <begin position="4"/>
        <end position="6"/>
    </location>
</feature>
<feature type="strand" evidence="16">
    <location>
        <begin position="9"/>
        <end position="13"/>
    </location>
</feature>
<feature type="strand" evidence="16">
    <location>
        <begin position="18"/>
        <end position="22"/>
    </location>
</feature>
<feature type="helix" evidence="16">
    <location>
        <begin position="30"/>
        <end position="37"/>
    </location>
</feature>
<feature type="helix" evidence="16">
    <location>
        <begin position="42"/>
        <end position="45"/>
    </location>
</feature>
<feature type="helix" evidence="16">
    <location>
        <begin position="55"/>
        <end position="68"/>
    </location>
</feature>
<feature type="strand" evidence="16">
    <location>
        <begin position="71"/>
        <end position="86"/>
    </location>
</feature>
<feature type="helix" evidence="16">
    <location>
        <begin position="107"/>
        <end position="109"/>
    </location>
</feature>
<feature type="helix" evidence="16">
    <location>
        <begin position="110"/>
        <end position="117"/>
    </location>
</feature>
<feature type="helix" evidence="16">
    <location>
        <begin position="125"/>
        <end position="130"/>
    </location>
</feature>
<feature type="helix" evidence="16">
    <location>
        <begin position="131"/>
        <end position="149"/>
    </location>
</feature>
<feature type="strand" evidence="16">
    <location>
        <begin position="155"/>
        <end position="158"/>
    </location>
</feature>
<feature type="turn" evidence="16">
    <location>
        <begin position="160"/>
        <end position="163"/>
    </location>
</feature>
<feature type="strand" evidence="16">
    <location>
        <begin position="165"/>
        <end position="168"/>
    </location>
</feature>
<feature type="helix" evidence="16">
    <location>
        <begin position="171"/>
        <end position="178"/>
    </location>
</feature>
<feature type="helix" evidence="16">
    <location>
        <begin position="182"/>
        <end position="184"/>
    </location>
</feature>
<feature type="helix" evidence="16">
    <location>
        <begin position="185"/>
        <end position="199"/>
    </location>
</feature>
<feature type="helix" evidence="16">
    <location>
        <begin position="202"/>
        <end position="213"/>
    </location>
</feature>
<feature type="strand" evidence="17">
    <location>
        <begin position="216"/>
        <end position="218"/>
    </location>
</feature>
<feature type="helix" evidence="16">
    <location>
        <begin position="221"/>
        <end position="230"/>
    </location>
</feature>
<feature type="helix" evidence="16">
    <location>
        <begin position="233"/>
        <end position="239"/>
    </location>
</feature>
<feature type="helix" evidence="16">
    <location>
        <begin position="241"/>
        <end position="250"/>
    </location>
</feature>
<feature type="helix" evidence="16">
    <location>
        <begin position="254"/>
        <end position="260"/>
    </location>
</feature>
<feature type="helix" evidence="16">
    <location>
        <begin position="266"/>
        <end position="276"/>
    </location>
</feature>
<feature type="turn" evidence="17">
    <location>
        <begin position="278"/>
        <end position="280"/>
    </location>
</feature>
<feature type="helix" evidence="16">
    <location>
        <begin position="285"/>
        <end position="307"/>
    </location>
</feature>
<feature type="helix" evidence="16">
    <location>
        <begin position="320"/>
        <end position="324"/>
    </location>
</feature>
<feature type="helix" evidence="16">
    <location>
        <begin position="326"/>
        <end position="354"/>
    </location>
</feature>
<feature type="helix" evidence="16">
    <location>
        <begin position="363"/>
        <end position="378"/>
    </location>
</feature>
<feature type="helix" evidence="16">
    <location>
        <begin position="380"/>
        <end position="393"/>
    </location>
</feature>
<feature type="strand" evidence="16">
    <location>
        <begin position="409"/>
        <end position="411"/>
    </location>
</feature>
<feature type="strand" evidence="16">
    <location>
        <begin position="414"/>
        <end position="417"/>
    </location>
</feature>
<feature type="strand" evidence="16">
    <location>
        <begin position="419"/>
        <end position="421"/>
    </location>
</feature>
<feature type="helix" evidence="16">
    <location>
        <begin position="424"/>
        <end position="430"/>
    </location>
</feature>
<feature type="helix" evidence="16">
    <location>
        <begin position="434"/>
        <end position="444"/>
    </location>
</feature>
<feature type="strand" evidence="16">
    <location>
        <begin position="451"/>
        <end position="453"/>
    </location>
</feature>
<feature type="helix" evidence="16">
    <location>
        <begin position="454"/>
        <end position="475"/>
    </location>
</feature>
<feature type="turn" evidence="17">
    <location>
        <begin position="478"/>
        <end position="480"/>
    </location>
</feature>
<feature type="helix" evidence="16">
    <location>
        <begin position="484"/>
        <end position="486"/>
    </location>
</feature>
<feature type="helix" evidence="16">
    <location>
        <begin position="497"/>
        <end position="506"/>
    </location>
</feature>
<feature type="helix" evidence="16">
    <location>
        <begin position="509"/>
        <end position="522"/>
    </location>
</feature>
<feature type="turn" evidence="16">
    <location>
        <begin position="523"/>
        <end position="527"/>
    </location>
</feature>
<feature type="helix" evidence="16">
    <location>
        <begin position="531"/>
        <end position="538"/>
    </location>
</feature>
<feature type="helix" evidence="16">
    <location>
        <begin position="556"/>
        <end position="561"/>
    </location>
</feature>
<feature type="helix" evidence="16">
    <location>
        <begin position="563"/>
        <end position="569"/>
    </location>
</feature>
<feature type="helix" evidence="16">
    <location>
        <begin position="582"/>
        <end position="601"/>
    </location>
</feature>
<feature type="helix" evidence="16">
    <location>
        <begin position="603"/>
        <end position="608"/>
    </location>
</feature>
<feature type="strand" evidence="16">
    <location>
        <begin position="609"/>
        <end position="612"/>
    </location>
</feature>
<feature type="helix" evidence="16">
    <location>
        <begin position="614"/>
        <end position="628"/>
    </location>
</feature>
<feature type="turn" evidence="17">
    <location>
        <begin position="630"/>
        <end position="632"/>
    </location>
</feature>
<feature type="strand" evidence="17">
    <location>
        <begin position="633"/>
        <end position="635"/>
    </location>
</feature>
<feature type="helix" evidence="17">
    <location>
        <begin position="639"/>
        <end position="643"/>
    </location>
</feature>
<feature type="helix" evidence="16">
    <location>
        <begin position="651"/>
        <end position="665"/>
    </location>
</feature>
<feature type="strand" evidence="17">
    <location>
        <begin position="669"/>
        <end position="671"/>
    </location>
</feature>
<feature type="helix" evidence="16">
    <location>
        <begin position="676"/>
        <end position="695"/>
    </location>
</feature>
<feature type="helix" evidence="16">
    <location>
        <begin position="699"/>
        <end position="703"/>
    </location>
</feature>
<feature type="helix" evidence="16">
    <location>
        <begin position="708"/>
        <end position="714"/>
    </location>
</feature>
<feature type="helix" evidence="16">
    <location>
        <begin position="717"/>
        <end position="731"/>
    </location>
</feature>
<feature type="strand" evidence="17">
    <location>
        <begin position="732"/>
        <end position="734"/>
    </location>
</feature>
<feature type="helix" evidence="16">
    <location>
        <begin position="738"/>
        <end position="746"/>
    </location>
</feature>
<feature type="helix" evidence="16">
    <location>
        <begin position="757"/>
        <end position="768"/>
    </location>
</feature>
<feature type="helix" evidence="16">
    <location>
        <begin position="771"/>
        <end position="787"/>
    </location>
</feature>
<feature type="helix" evidence="16">
    <location>
        <begin position="794"/>
        <end position="803"/>
    </location>
</feature>
<feature type="turn" evidence="16">
    <location>
        <begin position="804"/>
        <end position="806"/>
    </location>
</feature>
<feature type="strand" evidence="16">
    <location>
        <begin position="807"/>
        <end position="809"/>
    </location>
</feature>
<feature type="helix" evidence="16">
    <location>
        <begin position="818"/>
        <end position="822"/>
    </location>
</feature>
<feature type="strand" evidence="16">
    <location>
        <begin position="825"/>
        <end position="827"/>
    </location>
</feature>
<feature type="helix" evidence="16">
    <location>
        <begin position="835"/>
        <end position="841"/>
    </location>
</feature>
<feature type="strand" evidence="16">
    <location>
        <begin position="846"/>
        <end position="848"/>
    </location>
</feature>
<feature type="strand" evidence="16">
    <location>
        <begin position="850"/>
        <end position="853"/>
    </location>
</feature>
<feature type="helix" evidence="16">
    <location>
        <begin position="857"/>
        <end position="865"/>
    </location>
</feature>
<feature type="helix" evidence="16">
    <location>
        <begin position="868"/>
        <end position="876"/>
    </location>
</feature>
<feature type="turn" evidence="16">
    <location>
        <begin position="877"/>
        <end position="879"/>
    </location>
</feature>
<feature type="helix" evidence="16">
    <location>
        <begin position="884"/>
        <end position="894"/>
    </location>
</feature>
<feature type="helix" evidence="16">
    <location>
        <begin position="897"/>
        <end position="912"/>
    </location>
</feature>
<feature type="helix" evidence="16">
    <location>
        <begin position="922"/>
        <end position="945"/>
    </location>
</feature>
<feature type="helix" evidence="16">
    <location>
        <begin position="948"/>
        <end position="982"/>
    </location>
</feature>
<feature type="helix" evidence="16">
    <location>
        <begin position="987"/>
        <end position="993"/>
    </location>
</feature>
<feature type="helix" evidence="16">
    <location>
        <begin position="997"/>
        <end position="999"/>
    </location>
</feature>
<feature type="strand" evidence="16">
    <location>
        <begin position="1001"/>
        <end position="1003"/>
    </location>
</feature>
<feature type="helix" evidence="16">
    <location>
        <begin position="1008"/>
        <end position="1019"/>
    </location>
</feature>
<feature type="turn" evidence="17">
    <location>
        <begin position="1024"/>
        <end position="1027"/>
    </location>
</feature>
<feature type="helix" evidence="17">
    <location>
        <begin position="1028"/>
        <end position="1030"/>
    </location>
</feature>
<feature type="helix" evidence="16">
    <location>
        <begin position="1032"/>
        <end position="1041"/>
    </location>
</feature>
<feature type="helix" evidence="16">
    <location>
        <begin position="1046"/>
        <end position="1052"/>
    </location>
</feature>
<feature type="turn" evidence="16">
    <location>
        <begin position="1053"/>
        <end position="1059"/>
    </location>
</feature>
<feature type="helix" evidence="16">
    <location>
        <begin position="1064"/>
        <end position="1074"/>
    </location>
</feature>
<feature type="turn" evidence="16">
    <location>
        <begin position="1075"/>
        <end position="1077"/>
    </location>
</feature>
<feature type="helix" evidence="16">
    <location>
        <begin position="1079"/>
        <end position="1082"/>
    </location>
</feature>
<feature type="helix" evidence="16">
    <location>
        <begin position="1085"/>
        <end position="1096"/>
    </location>
</feature>
<feature type="strand" evidence="16">
    <location>
        <begin position="1098"/>
        <end position="1104"/>
    </location>
</feature>
<feature type="strand" evidence="17">
    <location>
        <begin position="1106"/>
        <end position="1108"/>
    </location>
</feature>
<feature type="strand" evidence="16">
    <location>
        <begin position="1110"/>
        <end position="1117"/>
    </location>
</feature>
<feature type="strand" evidence="16">
    <location>
        <begin position="1119"/>
        <end position="1123"/>
    </location>
</feature>
<feature type="strand" evidence="17">
    <location>
        <begin position="1125"/>
        <end position="1128"/>
    </location>
</feature>
<feature type="strand" evidence="16">
    <location>
        <begin position="1131"/>
        <end position="1136"/>
    </location>
</feature>
<feature type="helix" evidence="16">
    <location>
        <begin position="1138"/>
        <end position="1149"/>
    </location>
</feature>
<accession>C7NBY4</accession>
<comment type="function">
    <text evidence="2 3 4">CRISPR (clustered regularly interspaced short palindromic repeat), is an adaptive immune system that provides protection against mobile genetic elements (viruses, transposable elements and conjugative plasmids). CRISPR clusters contain sequences complementary to antecedent mobile elements (spacer sequences) and target invading nucleic acids. Unlike many single-component effectors, this CRISPR-Cas system targets RNA (PubMed:27669025). CRISPR clusters are transcribed from pre-CRISPR RNA (crRNA) and processed into crRNA by this protein (PubMed:27669025, PubMed:28475872, PubMed:28757251). pre-crRNA processing yields a 5'-OH and probably a 2',3'-cyclic phosphate (PubMed:27669025). Also cleaves pre-crRNA from several other type VI-A CRISPR systems (PubMed:28475872). Cleaves linear target ssRNA in a crRNA-dependent fashion, preferentially before U residues (PubMed:27669025, PubMed:28475872). Cleavage of target ssRNA is about 80-fold faster than pre-crRNA processing and uses a different active site (PubMed:27669025). Binding a viable target RNA target activates this protein for non-specific RNA degradation in vitro (called collateral RNA degradation) (PubMed:27669025, PubMed:28475872, PubMed:28757251). Activation occurs with 10 fM target RNA (PubMed:28475872). crRNA maturation is not essential for activation of RNA degradation, but lack of mature crRNA (due to mutagenesis) decreases activation levels (PubMed:28475872). This system has a 3' protospacer flanking site in the target RNA (PFS), which is C and unavailable to base pair with crRNA (PFS is equivalent to PAM, the protospacer adjacent motif) (PubMed:28757251).</text>
</comment>
<comment type="cofactor">
    <cofactor evidence="2">
        <name>a divalent metal cation</name>
        <dbReference type="ChEBI" id="CHEBI:60240"/>
    </cofactor>
    <text evidence="2">Pre-crRNA processing is metal independent, while crRNA-guided target RNA cleavage is dependent on divalent metal (i.e. inhibited by EDTA) (PubMed:27669025).</text>
</comment>
<comment type="activity regulation">
    <text evidence="4">Target RNA acts as an activator for non-specific ssRNA cleavage; the target RNA and complementary crRNA must both be at least 20 nucleotides long to activate the HEPN-like catalytic pocket for RNase activity (PubMed:28757251).</text>
</comment>
<comment type="subunit">
    <text evidence="8">Crystals show the 3'-end of target RNA interacting with an adjacent protein molecule, and mutagenesis of those amino acid residues decreases target RNA cleavage, but it is not clear if this is physiological (PubMed:28757251).</text>
</comment>
<comment type="domain">
    <text evidence="3 4 9">The X-ray structure in complex with crRNA and target RNA shows a crRNA-recognition lobe (REC, residues 1-360) which anchors the crRNA repeat and a nuclease lobe (NUC, residues 361-1159) which binds the spacer crRNA-target RNA duplex and cleaves target RNA (PubMed:28757251). The target ssRNase active sites are within the 2 HEPN-like folds, which interact in vivo to form the functional active site (PubMed:26593719, PubMed:28757251). The N-terminal region and HEPN-like fold 2 play a role in pre-crRNA processing (PubMed:28475872). Binding of target RNA to the Cas13a-crRNA complex induces conformational changes that include bringing the 2 HEPN-like domains together to form the target cleavage active site, widening the channel that binds the crRNA-target RNA duplex, facilitating contact between the NUC lobe and the RNA duplex, and altering the conformation of the crRNA (PubMed:28757251).</text>
</comment>
<comment type="biotechnology">
    <text evidence="2">Can be used to detect low levels of cellular transcripts, which might be useful to create sequence-specific RNA-targeting tools (PubMed:27669025).</text>
</comment>
<comment type="miscellaneous">
    <text evidence="9 12">Part of a type VI-A uridine-preferring CRISPR-Cas system.</text>
</comment>
<comment type="similarity">
    <text evidence="11">Belongs to the CRISPR-associated endoribonuclease Cas13a family.</text>
</comment>
<protein>
    <recommendedName>
        <fullName evidence="7">CRISPR-associated endoribonuclease Cas13a</fullName>
        <ecNumber evidence="2">3.1.-.-</ecNumber>
    </recommendedName>
    <alternativeName>
        <fullName evidence="5">CRISPR-associated endoribonuclease C2c2</fullName>
        <shortName>EndoRNase</shortName>
    </alternativeName>
    <alternativeName>
        <fullName evidence="6">LbuC2c2</fullName>
    </alternativeName>
</protein>
<dbReference type="EC" id="3.1.-.-" evidence="2"/>
<dbReference type="EMBL" id="CP001685">
    <property type="protein sequence ID" value="ACV39665.1"/>
    <property type="molecule type" value="Genomic_DNA"/>
</dbReference>
<dbReference type="RefSeq" id="WP_015770004.1">
    <property type="nucleotide sequence ID" value="NC_013192.1"/>
</dbReference>
<dbReference type="PDB" id="5XWP">
    <property type="method" value="X-ray"/>
    <property type="resolution" value="3.08 A"/>
    <property type="chains" value="A/B=1-1159"/>
</dbReference>
<dbReference type="PDB" id="5XWY">
    <property type="method" value="EM"/>
    <property type="resolution" value="3.20 A"/>
    <property type="chains" value="A=1-1159"/>
</dbReference>
<dbReference type="PDBsum" id="5XWP"/>
<dbReference type="PDBsum" id="5XWY"/>
<dbReference type="EMDB" id="EMD-6777"/>
<dbReference type="SMR" id="C7NBY4"/>
<dbReference type="KEGG" id="lba:Lebu_1799"/>
<dbReference type="eggNOG" id="ENOG5032JQS">
    <property type="taxonomic scope" value="Bacteria"/>
</dbReference>
<dbReference type="HOGENOM" id="CLU_008486_0_0_0"/>
<dbReference type="OrthoDB" id="3010189at2"/>
<dbReference type="Proteomes" id="UP000001910">
    <property type="component" value="Chromosome"/>
</dbReference>
<dbReference type="GO" id="GO:0004519">
    <property type="term" value="F:endonuclease activity"/>
    <property type="evidence" value="ECO:0007669"/>
    <property type="project" value="UniProtKB-KW"/>
</dbReference>
<dbReference type="GO" id="GO:0003723">
    <property type="term" value="F:RNA binding"/>
    <property type="evidence" value="ECO:0007669"/>
    <property type="project" value="UniProtKB-KW"/>
</dbReference>
<dbReference type="GO" id="GO:0051607">
    <property type="term" value="P:defense response to virus"/>
    <property type="evidence" value="ECO:0007669"/>
    <property type="project" value="UniProtKB-KW"/>
</dbReference>
<dbReference type="InterPro" id="IPR053395">
    <property type="entry name" value="Cas13a_endoribonuclease"/>
</dbReference>
<dbReference type="NCBIfam" id="NF038188">
    <property type="entry name" value="cas13A_C2c2"/>
    <property type="match status" value="1"/>
</dbReference>
<gene>
    <name evidence="7" type="primary">cas13a</name>
    <name evidence="5" type="synonym">c2c2</name>
    <name type="ordered locus">Lebu_1799</name>
</gene>
<sequence>MKVTKVGGISHKKYTSEGRLVKSESEENRTDERLSALLNMRLDMYIKNPSSTETKENQKRIGKLKKFFSNKMVYLKDNTLSLKNGKKENIDREYSETDILESDVRDKKNFAVLKKIYLNENVNSEELEVFRNDIKKKLNKINSLKYSFEKNKANYQKINENNIEKVEGKSKRNIIYDYYRESAKRDAYVSNVKEAFDKLYKEEDIAKLVLEIENLTKLEKYKIREFYHEIIGRKNDKENFAKIIYEEIQNVNNMKELIEKVPDMSELKKSQVFYKYYLDKEELNDKNIKYAFCHFVEIEMSQLLKNYVYKRLSNISNDKIKRIFEYQNLKKLIENKLLNKLDTYVRNCGKYNYYLQDGEIATSDFIARNRQNEAFLRNIIGVSSVAYFSLRNILETENENDITGRMRGKTVKNNKGEEKYVSGEVDKIYNENKKNEVKENLKMFYSYDFNMDNKNEIEDFFANIDEAISSIRHGIVHFNLELEGKDIFAFKNIAPSEISKKMFQNEINEKKLKLKIFRQLNSANVFRYLEKYKILNYLKRTRFEFVNKNIPFVPSFTKLYSRIDDLKNSLGIYWKTPKTNDDNKTKEIIDAQIYLLKNIYYGEFLNYFMSNNGNFFEISKEIIELNKNDKRNLKTGFYKLQKFEDIQEKIPKEYLANIQSLYMINAGNQDEEEKDTYIDFIQKIFLKGFMTYLANNGRLSLIYIGSDEETNTSLAEKKQEFDKFLKKYEQNNNIKIPYEINEFLREIKLGNILKYTERLNMFYLILKLLNHKELTNLKGSLEKYQSANKEEAFSDQLELINLLNLDNNRVTEDFELEADEIGKFLDFNGNKVKDNKELKKFDTNKIYFDGENIIKHRAFYNIKKYGMLNLLEKIADKAGYKISIEELKKYSNKKNEIEKNHKMQENLHRKYARPRKDEKFTDEDYESYKQAIENIEEYTHLKNKVEFNELNLLQGLLLRILHRLVGYTSIWERDLRFRLKGEFPENQYIEEIFNFENKKNVKYKGGQIVEKYIKFYKELHQNDEVKINKYSSANIKVLKQEKKDLYIRNYIAHFNYIPHAEISLLEVLENLRKLLSYDRKLKNAVMKSVVDILKEYGFVATFKIGADKKIGIQTLESEKIVHLKNLKKKKLMTDRNSEELCKLVKIMFEYKMEEKKSEN</sequence>
<evidence type="ECO:0000255" key="1"/>
<evidence type="ECO:0000269" key="2">
    <source>
    </source>
</evidence>
<evidence type="ECO:0000269" key="3">
    <source>
    </source>
</evidence>
<evidence type="ECO:0000269" key="4">
    <source>
    </source>
</evidence>
<evidence type="ECO:0000303" key="5">
    <source>
    </source>
</evidence>
<evidence type="ECO:0000303" key="6">
    <source>
    </source>
</evidence>
<evidence type="ECO:0000303" key="7">
    <source>
    </source>
</evidence>
<evidence type="ECO:0000303" key="8">
    <source>
    </source>
</evidence>
<evidence type="ECO:0000305" key="9">
    <source>
    </source>
</evidence>
<evidence type="ECO:0000305" key="10">
    <source>
    </source>
</evidence>
<evidence type="ECO:0000305" key="11">
    <source>
    </source>
</evidence>
<evidence type="ECO:0000305" key="12">
    <source>
    </source>
</evidence>
<evidence type="ECO:0000305" key="13">
    <source>
    </source>
</evidence>
<evidence type="ECO:0000312" key="14">
    <source>
        <dbReference type="PDB" id="5XWP"/>
    </source>
</evidence>
<evidence type="ECO:0000312" key="15">
    <source>
        <dbReference type="PDB" id="5XWY"/>
    </source>
</evidence>
<evidence type="ECO:0007829" key="16">
    <source>
        <dbReference type="PDB" id="5XWP"/>
    </source>
</evidence>
<evidence type="ECO:0007829" key="17">
    <source>
        <dbReference type="PDB" id="5XWY"/>
    </source>
</evidence>
<name>CS13A_LEPBD</name>
<reference key="1">
    <citation type="journal article" date="2009" name="Stand. Genomic Sci.">
        <title>Complete genome sequence of Leptotrichia buccalis type strain (C-1013-b).</title>
        <authorList>
            <person name="Ivanova N."/>
            <person name="Gronow S."/>
            <person name="Lapidus A."/>
            <person name="Copeland A."/>
            <person name="Glavina Del Rio T."/>
            <person name="Nolan M."/>
            <person name="Lucas S."/>
            <person name="Chen F."/>
            <person name="Tice H."/>
            <person name="Cheng J.F."/>
            <person name="Saunders E."/>
            <person name="Bruce D."/>
            <person name="Goodwin L."/>
            <person name="Brettin T."/>
            <person name="Detter J.C."/>
            <person name="Han C."/>
            <person name="Pitluck S."/>
            <person name="Mikhailova N."/>
            <person name="Pati A."/>
            <person name="Mavrommatis K."/>
            <person name="Chen A."/>
            <person name="Palaniappan K."/>
            <person name="Land M."/>
            <person name="Hauser L."/>
            <person name="Chang Y.J."/>
            <person name="Jeffries C.D."/>
            <person name="Chain P."/>
            <person name="Rohde C."/>
            <person name="Goker M."/>
            <person name="Bristow J."/>
            <person name="Eisen J.A."/>
            <person name="Markowitz V."/>
            <person name="Hugenholtz P."/>
            <person name="Kyrpides N.C."/>
            <person name="Klenk H.P."/>
        </authorList>
    </citation>
    <scope>NUCLEOTIDE SEQUENCE [LARGE SCALE GENOMIC DNA]</scope>
    <source>
        <strain>ATCC 14201 / DSM 1135 / JCM 12969 / NCTC 10249 / C-1013-b</strain>
    </source>
</reference>
<reference key="2">
    <citation type="journal article" date="2015" name="Mol. Cell">
        <title>Discovery and functional characterization of diverse class 2 CRISPR-Cas systems.</title>
        <authorList>
            <person name="Shmakov S."/>
            <person name="Abudayyeh O.O."/>
            <person name="Makarova K.S."/>
            <person name="Wolf Y.I."/>
            <person name="Gootenberg J.S."/>
            <person name="Semenova E."/>
            <person name="Minakhin L."/>
            <person name="Joung J."/>
            <person name="Konermann S."/>
            <person name="Severinov K."/>
            <person name="Zhang F."/>
            <person name="Koonin E.V."/>
        </authorList>
    </citation>
    <scope>IDENTIFICATION</scope>
    <scope>DOMAIN</scope>
</reference>
<reference key="3">
    <citation type="journal article" date="2016" name="Nature">
        <title>Two distinct RNase activities of CRISPR-C2c2 enable guide-RNA processing and RNA detection.</title>
        <authorList>
            <person name="East-Seletsky A."/>
            <person name="O'Connell M.R."/>
            <person name="Knight S.C."/>
            <person name="Burstein D."/>
            <person name="Cate J.H."/>
            <person name="Tjian R."/>
            <person name="Doudna J.A."/>
        </authorList>
    </citation>
    <scope>FUNCTION IN CRRNA PROCESSING</scope>
    <scope>FUNCTION IN TARGET SSRNA CLEAVAGE</scope>
    <scope>COFACTOR</scope>
    <scope>FUNCTION AS AN ENDORIBONUCLEASE</scope>
    <scope>BIOTECHNOLOGY</scope>
    <scope>MUTAGENESIS OF 472-ARG--HIS-477; 1048-ARG--HIS-1053 AND ARG-1079</scope>
    <scope>RNA-BINDING</scope>
    <source>
        <strain>ATCC 14201 / DSM 1135 / JCM 12969 / NCTC 10249 / C-1013-b</strain>
    </source>
</reference>
<reference key="4">
    <citation type="journal article" date="2017" name="Mol. Cell">
        <title>RNA targeting by functionally orthogonal type VI-A CRISPR-Cas enzymes.</title>
        <authorList>
            <person name="East-Seletsky A."/>
            <person name="O'Connell M.R."/>
            <person name="Burstein D."/>
            <person name="Knott G.J."/>
            <person name="Doudna J.A."/>
        </authorList>
    </citation>
    <scope>FUNCTION IN CRRNA PROCESSING</scope>
    <scope>FUNCTION AS AN ENDORIBONUCLEASE</scope>
    <scope>DOMAIN</scope>
    <scope>MUTAGENESIS OF GLU-299; LYS-310; ARG-311; ASN-314; ARG-1072; ASP-1078; 1079-ARG-LYS-1080; ARG-1079; LYS-1080; LYS-1082 AND LYS-1087</scope>
    <source>
        <strain>ATCC 14201 / DSM 1135 / JCM 12969 / NCTC 10249 / C-1013-b</strain>
    </source>
</reference>
<reference key="5">
    <citation type="journal article" date="2017" name="Nat. Rev. Microbiol.">
        <title>Diversity and evolution of class 2 CRISPR-Cas systems.</title>
        <authorList>
            <person name="Shmakov S."/>
            <person name="Smargon A."/>
            <person name="Scott D."/>
            <person name="Cox D."/>
            <person name="Pyzocha N."/>
            <person name="Yan W."/>
            <person name="Abudayyeh O.O."/>
            <person name="Gootenberg J.S."/>
            <person name="Makarova K.S."/>
            <person name="Wolf Y.I."/>
            <person name="Severinov K."/>
            <person name="Zhang F."/>
            <person name="Koonin E.V."/>
        </authorList>
    </citation>
    <scope>NOMENCLATURE</scope>
</reference>
<reference key="6">
    <citation type="journal article" date="2023" name="Nat. Commun.">
        <title>Assessing and advancing the safety of CRISPR-Cas tools: from DNA to RNA editing.</title>
        <authorList>
            <person name="Tao J."/>
            <person name="Bauer D.E."/>
            <person name="Chiarle R."/>
        </authorList>
    </citation>
    <scope>REVIEW ON SAFETY OF GENOME EDITING TOOLS</scope>
</reference>
<reference evidence="14 15" key="7">
    <citation type="journal article" date="2017" name="Cell">
        <title>The molecular architecture for RNA-guided RNA cleavage by Cas13a.</title>
        <authorList>
            <person name="Liu L."/>
            <person name="Li X."/>
            <person name="Ma J."/>
            <person name="Li Z."/>
            <person name="You L."/>
            <person name="Wang J."/>
            <person name="Wang M."/>
            <person name="Zhang X."/>
            <person name="Wang Y."/>
        </authorList>
    </citation>
    <scope>X-RAY CRYSTALLOGRAPHY (3.09 ANGSTROMS) IN COMPLEX WITH CRRNA AND TARGET SSRNA</scope>
    <scope>STRUCTURE BY ELECTRON MICROSCOPY (3.2 ANGSTROMS) IN COMPLEX WITH CRRNA</scope>
    <scope>FUNCTION IN CRRNA PROCESSING</scope>
    <scope>FUNCTION IN TARGET SSRNA CLEAVAGE</scope>
    <scope>ACTIVITY REGULATION</scope>
    <scope>SUBUNIT</scope>
    <scope>DOMAIN</scope>
    <scope>RNA-BINDING</scope>
    <scope>MUTAGENESIS OF LYS-2; LYS-5; ARG-322; GLN-371; PHE-375; HIS-473; GLN-519; LYS-558; TYR-601; LYS-718; LYS-783; ARG-809; LYS-845; ARG-857; TYR-938; LYS-942; HIS-962; ARG-963; PHE-995; ASN-997; LYS-998; ARG-1072; ARG-1079; LYS-1082; LYS-1108 AND ARG-1135</scope>
</reference>